<protein>
    <recommendedName>
        <fullName evidence="1">Enolase</fullName>
        <ecNumber evidence="1">4.2.1.11</ecNumber>
    </recommendedName>
    <alternativeName>
        <fullName evidence="1">2-phospho-D-glycerate hydro-lyase</fullName>
    </alternativeName>
    <alternativeName>
        <fullName evidence="1">2-phosphoglycerate dehydratase</fullName>
    </alternativeName>
</protein>
<name>ENO_HALMA</name>
<dbReference type="EC" id="4.2.1.11" evidence="1"/>
<dbReference type="EMBL" id="M76567">
    <property type="protein sequence ID" value="AAA73101.1"/>
    <property type="molecule type" value="Genomic_DNA"/>
</dbReference>
<dbReference type="EMBL" id="AY596297">
    <property type="protein sequence ID" value="AAV45149.1"/>
    <property type="molecule type" value="Genomic_DNA"/>
</dbReference>
<dbReference type="PIR" id="F41715">
    <property type="entry name" value="NOHSM"/>
</dbReference>
<dbReference type="RefSeq" id="WP_004963339.1">
    <property type="nucleotide sequence ID" value="NZ_CP039138.1"/>
</dbReference>
<dbReference type="SMR" id="P29201"/>
<dbReference type="STRING" id="272569.rrnAC0069"/>
<dbReference type="PaxDb" id="272569-rrnAC0069"/>
<dbReference type="EnsemblBacteria" id="AAV45149">
    <property type="protein sequence ID" value="AAV45149"/>
    <property type="gene ID" value="rrnAC0069"/>
</dbReference>
<dbReference type="GeneID" id="64823164"/>
<dbReference type="KEGG" id="hma:rrnAC0069"/>
<dbReference type="PATRIC" id="fig|272569.17.peg.877"/>
<dbReference type="eggNOG" id="arCOG01169">
    <property type="taxonomic scope" value="Archaea"/>
</dbReference>
<dbReference type="HOGENOM" id="CLU_031223_0_1_2"/>
<dbReference type="UniPathway" id="UPA00109">
    <property type="reaction ID" value="UER00187"/>
</dbReference>
<dbReference type="Proteomes" id="UP000001169">
    <property type="component" value="Chromosome I"/>
</dbReference>
<dbReference type="GO" id="GO:0009986">
    <property type="term" value="C:cell surface"/>
    <property type="evidence" value="ECO:0007669"/>
    <property type="project" value="UniProtKB-SubCell"/>
</dbReference>
<dbReference type="GO" id="GO:0005576">
    <property type="term" value="C:extracellular region"/>
    <property type="evidence" value="ECO:0007669"/>
    <property type="project" value="UniProtKB-SubCell"/>
</dbReference>
<dbReference type="GO" id="GO:0000015">
    <property type="term" value="C:phosphopyruvate hydratase complex"/>
    <property type="evidence" value="ECO:0007669"/>
    <property type="project" value="InterPro"/>
</dbReference>
<dbReference type="GO" id="GO:0000287">
    <property type="term" value="F:magnesium ion binding"/>
    <property type="evidence" value="ECO:0007669"/>
    <property type="project" value="UniProtKB-UniRule"/>
</dbReference>
<dbReference type="GO" id="GO:0004634">
    <property type="term" value="F:phosphopyruvate hydratase activity"/>
    <property type="evidence" value="ECO:0007669"/>
    <property type="project" value="UniProtKB-UniRule"/>
</dbReference>
<dbReference type="GO" id="GO:0006096">
    <property type="term" value="P:glycolytic process"/>
    <property type="evidence" value="ECO:0007669"/>
    <property type="project" value="UniProtKB-UniRule"/>
</dbReference>
<dbReference type="CDD" id="cd03313">
    <property type="entry name" value="enolase"/>
    <property type="match status" value="1"/>
</dbReference>
<dbReference type="Gene3D" id="3.20.20.120">
    <property type="entry name" value="Enolase-like C-terminal domain"/>
    <property type="match status" value="1"/>
</dbReference>
<dbReference type="Gene3D" id="3.30.390.10">
    <property type="entry name" value="Enolase-like, N-terminal domain"/>
    <property type="match status" value="1"/>
</dbReference>
<dbReference type="HAMAP" id="MF_00318">
    <property type="entry name" value="Enolase"/>
    <property type="match status" value="1"/>
</dbReference>
<dbReference type="InterPro" id="IPR000941">
    <property type="entry name" value="Enolase"/>
</dbReference>
<dbReference type="InterPro" id="IPR036849">
    <property type="entry name" value="Enolase-like_C_sf"/>
</dbReference>
<dbReference type="InterPro" id="IPR029017">
    <property type="entry name" value="Enolase-like_N"/>
</dbReference>
<dbReference type="InterPro" id="IPR020810">
    <property type="entry name" value="Enolase_C"/>
</dbReference>
<dbReference type="InterPro" id="IPR020809">
    <property type="entry name" value="Enolase_CS"/>
</dbReference>
<dbReference type="InterPro" id="IPR020811">
    <property type="entry name" value="Enolase_N"/>
</dbReference>
<dbReference type="NCBIfam" id="TIGR01060">
    <property type="entry name" value="eno"/>
    <property type="match status" value="1"/>
</dbReference>
<dbReference type="PANTHER" id="PTHR11902">
    <property type="entry name" value="ENOLASE"/>
    <property type="match status" value="1"/>
</dbReference>
<dbReference type="PANTHER" id="PTHR11902:SF1">
    <property type="entry name" value="ENOLASE"/>
    <property type="match status" value="1"/>
</dbReference>
<dbReference type="Pfam" id="PF00113">
    <property type="entry name" value="Enolase_C"/>
    <property type="match status" value="1"/>
</dbReference>
<dbReference type="Pfam" id="PF03952">
    <property type="entry name" value="Enolase_N"/>
    <property type="match status" value="1"/>
</dbReference>
<dbReference type="PIRSF" id="PIRSF001400">
    <property type="entry name" value="Enolase"/>
    <property type="match status" value="1"/>
</dbReference>
<dbReference type="PRINTS" id="PR00148">
    <property type="entry name" value="ENOLASE"/>
</dbReference>
<dbReference type="SFLD" id="SFLDS00001">
    <property type="entry name" value="Enolase"/>
    <property type="match status" value="1"/>
</dbReference>
<dbReference type="SFLD" id="SFLDF00002">
    <property type="entry name" value="enolase"/>
    <property type="match status" value="1"/>
</dbReference>
<dbReference type="SMART" id="SM01192">
    <property type="entry name" value="Enolase_C"/>
    <property type="match status" value="1"/>
</dbReference>
<dbReference type="SMART" id="SM01193">
    <property type="entry name" value="Enolase_N"/>
    <property type="match status" value="1"/>
</dbReference>
<dbReference type="SUPFAM" id="SSF51604">
    <property type="entry name" value="Enolase C-terminal domain-like"/>
    <property type="match status" value="1"/>
</dbReference>
<dbReference type="SUPFAM" id="SSF54826">
    <property type="entry name" value="Enolase N-terminal domain-like"/>
    <property type="match status" value="1"/>
</dbReference>
<dbReference type="PROSITE" id="PS00164">
    <property type="entry name" value="ENOLASE"/>
    <property type="match status" value="1"/>
</dbReference>
<accession>P29201</accession>
<accession>Q5V5Q3</accession>
<proteinExistence type="inferred from homology"/>
<evidence type="ECO:0000255" key="1">
    <source>
        <dbReference type="HAMAP-Rule" id="MF_00318"/>
    </source>
</evidence>
<evidence type="ECO:0000305" key="2"/>
<reference key="1">
    <citation type="journal article" date="1991" name="J. Biol. Chem.">
        <title>Halobacterial S9 operon. Three ribosomal protein genes are cotranscribed with genes encoding a tRNA(Leu), the enolase, and a putative membrane protein in the archaebacterium Haloarcula (Halobacterium) marismortui.</title>
        <authorList>
            <person name="Kroemer W.J."/>
            <person name="Arndt E."/>
        </authorList>
    </citation>
    <scope>NUCLEOTIDE SEQUENCE [GENOMIC DNA]</scope>
</reference>
<reference key="2">
    <citation type="journal article" date="2004" name="Genome Res.">
        <title>Genome sequence of Haloarcula marismortui: a halophilic archaeon from the Dead Sea.</title>
        <authorList>
            <person name="Baliga N.S."/>
            <person name="Bonneau R."/>
            <person name="Facciotti M.T."/>
            <person name="Pan M."/>
            <person name="Glusman G."/>
            <person name="Deutsch E.W."/>
            <person name="Shannon P."/>
            <person name="Chiu Y."/>
            <person name="Weng R.S."/>
            <person name="Gan R.R."/>
            <person name="Hung P."/>
            <person name="Date S.V."/>
            <person name="Marcotte E."/>
            <person name="Hood L."/>
            <person name="Ng W.V."/>
        </authorList>
    </citation>
    <scope>NUCLEOTIDE SEQUENCE [LARGE SCALE GENOMIC DNA]</scope>
    <source>
        <strain>ATCC 43049 / DSM 3752 / JCM 8966 / VKM B-1809</strain>
    </source>
</reference>
<keyword id="KW-0963">Cytoplasm</keyword>
<keyword id="KW-0324">Glycolysis</keyword>
<keyword id="KW-0456">Lyase</keyword>
<keyword id="KW-0460">Magnesium</keyword>
<keyword id="KW-0479">Metal-binding</keyword>
<keyword id="KW-1185">Reference proteome</keyword>
<keyword id="KW-0964">Secreted</keyword>
<feature type="chain" id="PRO_0000134021" description="Enolase">
    <location>
        <begin position="1"/>
        <end position="401"/>
    </location>
</feature>
<feature type="active site" description="Proton donor" evidence="1">
    <location>
        <position position="196"/>
    </location>
</feature>
<feature type="active site" description="Proton acceptor" evidence="1">
    <location>
        <position position="327"/>
    </location>
</feature>
<feature type="binding site" evidence="1">
    <location>
        <position position="154"/>
    </location>
    <ligand>
        <name>(2R)-2-phosphoglycerate</name>
        <dbReference type="ChEBI" id="CHEBI:58289"/>
    </ligand>
</feature>
<feature type="binding site" evidence="1">
    <location>
        <position position="232"/>
    </location>
    <ligand>
        <name>Mg(2+)</name>
        <dbReference type="ChEBI" id="CHEBI:18420"/>
    </ligand>
</feature>
<feature type="binding site" evidence="1">
    <location>
        <position position="275"/>
    </location>
    <ligand>
        <name>Mg(2+)</name>
        <dbReference type="ChEBI" id="CHEBI:18420"/>
    </ligand>
</feature>
<feature type="binding site" evidence="1">
    <location>
        <position position="302"/>
    </location>
    <ligand>
        <name>Mg(2+)</name>
        <dbReference type="ChEBI" id="CHEBI:18420"/>
    </ligand>
</feature>
<feature type="binding site" evidence="1">
    <location>
        <position position="327"/>
    </location>
    <ligand>
        <name>(2R)-2-phosphoglycerate</name>
        <dbReference type="ChEBI" id="CHEBI:58289"/>
    </ligand>
</feature>
<feature type="binding site" evidence="1">
    <location>
        <position position="356"/>
    </location>
    <ligand>
        <name>(2R)-2-phosphoglycerate</name>
        <dbReference type="ChEBI" id="CHEBI:58289"/>
    </ligand>
</feature>
<feature type="binding site" evidence="1">
    <location>
        <position position="357"/>
    </location>
    <ligand>
        <name>(2R)-2-phosphoglycerate</name>
        <dbReference type="ChEBI" id="CHEBI:58289"/>
    </ligand>
</feature>
<feature type="binding site" evidence="1">
    <location>
        <position position="378"/>
    </location>
    <ligand>
        <name>(2R)-2-phosphoglycerate</name>
        <dbReference type="ChEBI" id="CHEBI:58289"/>
    </ligand>
</feature>
<feature type="sequence conflict" description="In Ref. 1; AAA73101." evidence="2" ref="1">
    <original>A</original>
    <variation>T</variation>
    <location>
        <position position="82"/>
    </location>
</feature>
<feature type="sequence conflict" description="In Ref. 1; AAA73101." evidence="2" ref="1">
    <location>
        <position position="144"/>
    </location>
</feature>
<feature type="sequence conflict" description="In Ref. 1; AAA73101." evidence="2" ref="1">
    <original>G</original>
    <variation>R</variation>
    <location>
        <position position="235"/>
    </location>
</feature>
<comment type="function">
    <text evidence="1">Catalyzes the reversible conversion of 2-phosphoglycerate (2-PG) into phosphoenolpyruvate (PEP). It is essential for the degradation of carbohydrates via glycolysis.</text>
</comment>
<comment type="catalytic activity">
    <reaction evidence="1">
        <text>(2R)-2-phosphoglycerate = phosphoenolpyruvate + H2O</text>
        <dbReference type="Rhea" id="RHEA:10164"/>
        <dbReference type="ChEBI" id="CHEBI:15377"/>
        <dbReference type="ChEBI" id="CHEBI:58289"/>
        <dbReference type="ChEBI" id="CHEBI:58702"/>
        <dbReference type="EC" id="4.2.1.11"/>
    </reaction>
</comment>
<comment type="cofactor">
    <cofactor evidence="1">
        <name>Mg(2+)</name>
        <dbReference type="ChEBI" id="CHEBI:18420"/>
    </cofactor>
    <text evidence="1">Binds a second Mg(2+) ion via substrate during catalysis.</text>
</comment>
<comment type="pathway">
    <text evidence="1">Carbohydrate degradation; glycolysis; pyruvate from D-glyceraldehyde 3-phosphate: step 4/5.</text>
</comment>
<comment type="subcellular location">
    <subcellularLocation>
        <location evidence="1">Cytoplasm</location>
    </subcellularLocation>
    <subcellularLocation>
        <location evidence="1">Secreted</location>
    </subcellularLocation>
    <subcellularLocation>
        <location evidence="1">Cell surface</location>
    </subcellularLocation>
    <text evidence="1">Fractions of enolase are present in both the cytoplasm and on the cell surface.</text>
</comment>
<comment type="similarity">
    <text evidence="1">Belongs to the enolase family.</text>
</comment>
<gene>
    <name evidence="1" type="primary">eno</name>
    <name type="ordered locus">rrnAC0069</name>
</gene>
<organism>
    <name type="scientific">Haloarcula marismortui (strain ATCC 43049 / DSM 3752 / JCM 8966 / VKM B-1809)</name>
    <name type="common">Halobacterium marismortui</name>
    <dbReference type="NCBI Taxonomy" id="272569"/>
    <lineage>
        <taxon>Archaea</taxon>
        <taxon>Methanobacteriati</taxon>
        <taxon>Methanobacteriota</taxon>
        <taxon>Stenosarchaea group</taxon>
        <taxon>Halobacteria</taxon>
        <taxon>Halobacteriales</taxon>
        <taxon>Haloarculaceae</taxon>
        <taxon>Haloarcula</taxon>
    </lineage>
</organism>
<sequence length="401" mass="41915">MTLITDIRLRRVLDSRGNATVEADVLTESGGFGRGKAPSGASTGEYEAIELPANEAIAKAREEALPRLIGEVHAGNQRDVDAALHAADGTDDFSGIGANSAVAISMAAAKAGADVLGAPLYQHLGGTFRGNEYPTPLGNIIGGGEHAADATNIQEFLAAPVGAPSVEEAVFANAAVHQEVHDILADRDLPAGKGDEGAWAPSVSDDEAFEIMDEAVETVADDFGFAISFGLDVAGAELYDDEADGYVYDDGVKSTEEQIEYIAGKVEEYDLVYVEDPLDENDYEAFADLTAQVGDQTLVCGDDLFVTNVERLQAGINADAGNSILIKPNQIGTLTDAVDAIELATASGYESVVSHRSGETEDTTIAHLAVATDAPFIKTGAVGGERTAKLNELIRIEDNAV</sequence>